<geneLocation type="plasmid">
    <name>pCRL291.1</name>
</geneLocation>
<comment type="function">
    <text evidence="1">Antitoxin component of a type II toxin-antitoxin (TA) system. Neutralizes the toxic effect of cognate zeta toxin. Part of a postsegregational killing (PSK) system involved in the killing of plasmid-free cells. Continuous synthesis of the epsilon antitoxin is required to counteract the zeta toxin (By similarity).</text>
</comment>
<comment type="subunit">
    <text evidence="1">In the presence of the zeta toxin, forms an inactive PezA(2)PezT(2) heterotetramer.</text>
</comment>
<comment type="similarity">
    <text evidence="2">Belongs to the epsilon antitoxin family.</text>
</comment>
<sequence>MALDYRKTFEIEIINEFQSAIHSKMLNYVLNNELDKSDSTNLQTNLLNQLSNMNQINLFKLSLEELEAYHEYLRSIKKYADSITRTT</sequence>
<name>EATX_LACLL</name>
<organism>
    <name type="scientific">Lactococcus lactis subsp. lactis</name>
    <name type="common">Streptococcus lactis</name>
    <dbReference type="NCBI Taxonomy" id="1360"/>
    <lineage>
        <taxon>Bacteria</taxon>
        <taxon>Bacillati</taxon>
        <taxon>Bacillota</taxon>
        <taxon>Bacilli</taxon>
        <taxon>Lactobacillales</taxon>
        <taxon>Streptococcaceae</taxon>
        <taxon>Lactococcus</taxon>
    </lineage>
</organism>
<accession>Q93NB3</accession>
<evidence type="ECO:0000250" key="1"/>
<evidence type="ECO:0000305" key="2"/>
<reference key="1">
    <citation type="submission" date="2001-05" db="EMBL/GenBank/DDBJ databases">
        <authorList>
            <person name="Saavedra L."/>
            <person name="Fontana C."/>
            <person name="Vignolo G."/>
            <person name="Ruiz-Holgado A.P."/>
            <person name="Sesma F."/>
        </authorList>
    </citation>
    <scope>NUCLEOTIDE SEQUENCE [GENOMIC DNA]</scope>
</reference>
<keyword id="KW-0614">Plasmid</keyword>
<keyword id="KW-1277">Toxin-antitoxin system</keyword>
<proteinExistence type="inferred from homology"/>
<protein>
    <recommendedName>
        <fullName>Antitoxin epsilon</fullName>
    </recommendedName>
</protein>
<feature type="chain" id="PRO_0000221548" description="Antitoxin epsilon">
    <location>
        <begin position="1"/>
        <end position="87"/>
    </location>
</feature>
<dbReference type="EMBL" id="AF380336">
    <property type="protein sequence ID" value="AAK59285.1"/>
    <property type="molecule type" value="Genomic_DNA"/>
</dbReference>
<dbReference type="RefSeq" id="NP_116737.1">
    <property type="nucleotide sequence ID" value="NC_002799.1"/>
</dbReference>
<dbReference type="SMR" id="Q93NB3"/>
<dbReference type="GO" id="GO:0015643">
    <property type="term" value="F:toxic substance binding"/>
    <property type="evidence" value="ECO:0007669"/>
    <property type="project" value="InterPro"/>
</dbReference>
<dbReference type="GO" id="GO:0031342">
    <property type="term" value="P:negative regulation of cell killing"/>
    <property type="evidence" value="ECO:0007669"/>
    <property type="project" value="InterPro"/>
</dbReference>
<dbReference type="GO" id="GO:0009636">
    <property type="term" value="P:response to toxic substance"/>
    <property type="evidence" value="ECO:0007669"/>
    <property type="project" value="InterPro"/>
</dbReference>
<dbReference type="Gene3D" id="1.10.8.130">
    <property type="match status" value="1"/>
</dbReference>
<dbReference type="InterPro" id="IPR035569">
    <property type="entry name" value="Antitoxin_epsilon/PezA_dom_sf"/>
</dbReference>
<dbReference type="InterPro" id="IPR015090">
    <property type="entry name" value="Epsilon_PezA_dom"/>
</dbReference>
<dbReference type="Pfam" id="PF08998">
    <property type="entry name" value="Epsilon_antitox"/>
    <property type="match status" value="1"/>
</dbReference>
<dbReference type="SUPFAM" id="SSF81710">
    <property type="entry name" value="Plasmid maintenance system epsilon/zeta, antidote epsilon subunit"/>
    <property type="match status" value="1"/>
</dbReference>